<keyword id="KW-0008">Acetylcholine receptor inhibiting toxin</keyword>
<keyword id="KW-0903">Direct protein sequencing</keyword>
<keyword id="KW-1015">Disulfide bond</keyword>
<keyword id="KW-0872">Ion channel impairing toxin</keyword>
<keyword id="KW-0528">Neurotoxin</keyword>
<keyword id="KW-0629">Postsynaptic neurotoxin</keyword>
<keyword id="KW-0964">Secreted</keyword>
<keyword id="KW-0800">Toxin</keyword>
<dbReference type="PIR" id="JC0005">
    <property type="entry name" value="N2OH3"/>
</dbReference>
<dbReference type="SMR" id="P07526"/>
<dbReference type="GO" id="GO:0005576">
    <property type="term" value="C:extracellular region"/>
    <property type="evidence" value="ECO:0007669"/>
    <property type="project" value="UniProtKB-SubCell"/>
</dbReference>
<dbReference type="GO" id="GO:0030550">
    <property type="term" value="F:acetylcholine receptor inhibitor activity"/>
    <property type="evidence" value="ECO:0007669"/>
    <property type="project" value="UniProtKB-KW"/>
</dbReference>
<dbReference type="GO" id="GO:0099106">
    <property type="term" value="F:ion channel regulator activity"/>
    <property type="evidence" value="ECO:0007669"/>
    <property type="project" value="UniProtKB-KW"/>
</dbReference>
<dbReference type="GO" id="GO:0090729">
    <property type="term" value="F:toxin activity"/>
    <property type="evidence" value="ECO:0007669"/>
    <property type="project" value="UniProtKB-KW"/>
</dbReference>
<dbReference type="CDD" id="cd00206">
    <property type="entry name" value="TFP_snake_toxin"/>
    <property type="match status" value="1"/>
</dbReference>
<dbReference type="Gene3D" id="2.10.60.10">
    <property type="entry name" value="CD59"/>
    <property type="match status" value="1"/>
</dbReference>
<dbReference type="InterPro" id="IPR003571">
    <property type="entry name" value="Snake_3FTx"/>
</dbReference>
<dbReference type="InterPro" id="IPR045860">
    <property type="entry name" value="Snake_toxin-like_sf"/>
</dbReference>
<dbReference type="InterPro" id="IPR054131">
    <property type="entry name" value="Toxin_cobra-type"/>
</dbReference>
<dbReference type="Pfam" id="PF21947">
    <property type="entry name" value="Toxin_cobra-type"/>
    <property type="match status" value="1"/>
</dbReference>
<dbReference type="SUPFAM" id="SSF57302">
    <property type="entry name" value="Snake toxin-like"/>
    <property type="match status" value="1"/>
</dbReference>
<proteinExistence type="evidence at protein level"/>
<comment type="function">
    <text evidence="1">Binds with high affinity to muscular (alpha-1/CHRNA1) and neuronal (alpha-7/CHRNA7) nicotinic acetylcholine receptor (nAChR) and inhibits acetylcholine from binding to the receptor, thereby impairing neuromuscular and neuronal transmission.</text>
</comment>
<comment type="subcellular location">
    <subcellularLocation>
        <location evidence="2">Secreted</location>
    </subcellularLocation>
</comment>
<comment type="tissue specificity">
    <text evidence="3">Expressed by the venom gland.</text>
</comment>
<comment type="similarity">
    <text evidence="3">Belongs to the three-finger toxin family. Long-chain subfamily. Type II alpha-neurotoxin sub-subfamily.</text>
</comment>
<evidence type="ECO:0000250" key="1">
    <source>
        <dbReference type="UniProtKB" id="P60615"/>
    </source>
</evidence>
<evidence type="ECO:0000269" key="2">
    <source ref="1"/>
</evidence>
<evidence type="ECO:0000305" key="3"/>
<accession>P07526</accession>
<organism>
    <name type="scientific">Ophiophagus hannah</name>
    <name type="common">King cobra</name>
    <name type="synonym">Naja hannah</name>
    <dbReference type="NCBI Taxonomy" id="8665"/>
    <lineage>
        <taxon>Eukaryota</taxon>
        <taxon>Metazoa</taxon>
        <taxon>Chordata</taxon>
        <taxon>Craniata</taxon>
        <taxon>Vertebrata</taxon>
        <taxon>Euteleostomi</taxon>
        <taxon>Lepidosauria</taxon>
        <taxon>Squamata</taxon>
        <taxon>Bifurcata</taxon>
        <taxon>Unidentata</taxon>
        <taxon>Episquamata</taxon>
        <taxon>Toxicofera</taxon>
        <taxon>Serpentes</taxon>
        <taxon>Colubroidea</taxon>
        <taxon>Elapidae</taxon>
        <taxon>Elapinae</taxon>
        <taxon>Ophiophagus</taxon>
    </lineage>
</organism>
<reference key="1">
    <citation type="journal article" date="1984" name="Sheng Wu Hua Xue Yu Sheng Wu Wu Li Xue Bao">
        <title>Amino-acid sequence of the neurotoxin (CM-9) from the snake venom of Quangxi king cobra.</title>
        <authorList>
            <person name="Lin N.Q."/>
            <person name="Zhang Y.S."/>
            <person name="Mu J.F."/>
            <person name="Wang W.Y."/>
            <person name="Yang C.J."/>
            <person name="Xiong Y.L."/>
        </authorList>
    </citation>
    <scope>PROTEIN SEQUENCE</scope>
    <scope>SUBCELLULAR LOCATION</scope>
    <source>
        <tissue>Venom</tissue>
    </source>
</reference>
<name>3L23_OPHHA</name>
<sequence length="73" mass="7957">TKCYVTPDVKSETCPAGQDLCYTETWCVAWCTVRGKRVSLTCAAICPIVPPKVSIKCCSTDACGPFPTWPNVR</sequence>
<feature type="chain" id="PRO_0000093558" description="Long neurotoxin 3">
    <location>
        <begin position="1"/>
        <end position="73"/>
    </location>
</feature>
<feature type="disulfide bond">
    <location>
        <begin position="3"/>
        <end position="21"/>
    </location>
</feature>
<feature type="disulfide bond">
    <location>
        <begin position="14"/>
        <end position="42"/>
    </location>
</feature>
<feature type="disulfide bond">
    <location>
        <begin position="27"/>
        <end position="31"/>
    </location>
</feature>
<feature type="disulfide bond">
    <location>
        <begin position="46"/>
        <end position="57"/>
    </location>
</feature>
<feature type="disulfide bond">
    <location>
        <begin position="58"/>
        <end position="63"/>
    </location>
</feature>
<protein>
    <recommendedName>
        <fullName>Long neurotoxin 3</fullName>
    </recommendedName>
    <alternativeName>
        <fullName>Neurotoxin CM-9</fullName>
    </alternativeName>
</protein>